<keyword id="KW-0067">ATP-binding</keyword>
<keyword id="KW-0963">Cytoplasm</keyword>
<keyword id="KW-0418">Kinase</keyword>
<keyword id="KW-0460">Magnesium</keyword>
<keyword id="KW-0479">Metal-binding</keyword>
<keyword id="KW-0546">Nucleotide metabolism</keyword>
<keyword id="KW-0547">Nucleotide-binding</keyword>
<keyword id="KW-0597">Phosphoprotein</keyword>
<keyword id="KW-1185">Reference proteome</keyword>
<keyword id="KW-0808">Transferase</keyword>
<comment type="function">
    <text evidence="1">Major role in the synthesis of nucleoside triphosphates other than ATP. The ATP gamma phosphate is transferred to the NDP beta phosphate via a ping-pong mechanism, using a phosphorylated active-site intermediate.</text>
</comment>
<comment type="catalytic activity">
    <reaction evidence="1">
        <text>a 2'-deoxyribonucleoside 5'-diphosphate + ATP = a 2'-deoxyribonucleoside 5'-triphosphate + ADP</text>
        <dbReference type="Rhea" id="RHEA:44640"/>
        <dbReference type="ChEBI" id="CHEBI:30616"/>
        <dbReference type="ChEBI" id="CHEBI:61560"/>
        <dbReference type="ChEBI" id="CHEBI:73316"/>
        <dbReference type="ChEBI" id="CHEBI:456216"/>
        <dbReference type="EC" id="2.7.4.6"/>
    </reaction>
</comment>
<comment type="catalytic activity">
    <reaction evidence="1">
        <text>a ribonucleoside 5'-diphosphate + ATP = a ribonucleoside 5'-triphosphate + ADP</text>
        <dbReference type="Rhea" id="RHEA:18113"/>
        <dbReference type="ChEBI" id="CHEBI:30616"/>
        <dbReference type="ChEBI" id="CHEBI:57930"/>
        <dbReference type="ChEBI" id="CHEBI:61557"/>
        <dbReference type="ChEBI" id="CHEBI:456216"/>
        <dbReference type="EC" id="2.7.4.6"/>
    </reaction>
</comment>
<comment type="cofactor">
    <cofactor evidence="1">
        <name>Mg(2+)</name>
        <dbReference type="ChEBI" id="CHEBI:18420"/>
    </cofactor>
</comment>
<comment type="subunit">
    <text evidence="1">Homotetramer.</text>
</comment>
<comment type="subcellular location">
    <subcellularLocation>
        <location evidence="1">Cytoplasm</location>
    </subcellularLocation>
</comment>
<comment type="similarity">
    <text evidence="1">Belongs to the NDK family.</text>
</comment>
<name>NDK_HALH5</name>
<feature type="chain" id="PRO_0000136942" description="Nucleoside diphosphate kinase">
    <location>
        <begin position="1"/>
        <end position="147"/>
    </location>
</feature>
<feature type="active site" description="Pros-phosphohistidine intermediate" evidence="1">
    <location>
        <position position="115"/>
    </location>
</feature>
<feature type="binding site" evidence="1">
    <location>
        <position position="9"/>
    </location>
    <ligand>
        <name>ATP</name>
        <dbReference type="ChEBI" id="CHEBI:30616"/>
    </ligand>
</feature>
<feature type="binding site" evidence="1">
    <location>
        <position position="57"/>
    </location>
    <ligand>
        <name>ATP</name>
        <dbReference type="ChEBI" id="CHEBI:30616"/>
    </ligand>
</feature>
<feature type="binding site" evidence="1">
    <location>
        <position position="85"/>
    </location>
    <ligand>
        <name>ATP</name>
        <dbReference type="ChEBI" id="CHEBI:30616"/>
    </ligand>
</feature>
<feature type="binding site" evidence="1">
    <location>
        <position position="91"/>
    </location>
    <ligand>
        <name>ATP</name>
        <dbReference type="ChEBI" id="CHEBI:30616"/>
    </ligand>
</feature>
<feature type="binding site" evidence="1">
    <location>
        <position position="102"/>
    </location>
    <ligand>
        <name>ATP</name>
        <dbReference type="ChEBI" id="CHEBI:30616"/>
    </ligand>
</feature>
<feature type="binding site" evidence="1">
    <location>
        <position position="112"/>
    </location>
    <ligand>
        <name>ATP</name>
        <dbReference type="ChEBI" id="CHEBI:30616"/>
    </ligand>
</feature>
<feature type="modified residue" description="Phosphothreonine" evidence="1">
    <location>
        <position position="91"/>
    </location>
</feature>
<feature type="modified residue" description="Phosphoserine" evidence="1">
    <location>
        <position position="122"/>
    </location>
</feature>
<organism>
    <name type="scientific">Halalkalibacterium halodurans (strain ATCC BAA-125 / DSM 18197 / FERM 7344 / JCM 9153 / C-125)</name>
    <name type="common">Bacillus halodurans</name>
    <dbReference type="NCBI Taxonomy" id="272558"/>
    <lineage>
        <taxon>Bacteria</taxon>
        <taxon>Bacillati</taxon>
        <taxon>Bacillota</taxon>
        <taxon>Bacilli</taxon>
        <taxon>Bacillales</taxon>
        <taxon>Bacillaceae</taxon>
        <taxon>Halalkalibacterium (ex Joshi et al. 2022)</taxon>
    </lineage>
</organism>
<dbReference type="EC" id="2.7.4.6" evidence="1"/>
<dbReference type="EMBL" id="BA000004">
    <property type="protein sequence ID" value="BAB05373.1"/>
    <property type="molecule type" value="Genomic_DNA"/>
</dbReference>
<dbReference type="PIR" id="F83856">
    <property type="entry name" value="F83856"/>
</dbReference>
<dbReference type="RefSeq" id="WP_010897816.1">
    <property type="nucleotide sequence ID" value="NC_002570.2"/>
</dbReference>
<dbReference type="SMR" id="Q9KCB9"/>
<dbReference type="STRING" id="272558.gene:10727552"/>
<dbReference type="GeneID" id="87597272"/>
<dbReference type="KEGG" id="bha:BH1654"/>
<dbReference type="eggNOG" id="COG0105">
    <property type="taxonomic scope" value="Bacteria"/>
</dbReference>
<dbReference type="HOGENOM" id="CLU_060216_6_3_9"/>
<dbReference type="OrthoDB" id="9801161at2"/>
<dbReference type="Proteomes" id="UP000001258">
    <property type="component" value="Chromosome"/>
</dbReference>
<dbReference type="GO" id="GO:0005737">
    <property type="term" value="C:cytoplasm"/>
    <property type="evidence" value="ECO:0007669"/>
    <property type="project" value="UniProtKB-SubCell"/>
</dbReference>
<dbReference type="GO" id="GO:0005524">
    <property type="term" value="F:ATP binding"/>
    <property type="evidence" value="ECO:0007669"/>
    <property type="project" value="UniProtKB-UniRule"/>
</dbReference>
<dbReference type="GO" id="GO:0046872">
    <property type="term" value="F:metal ion binding"/>
    <property type="evidence" value="ECO:0007669"/>
    <property type="project" value="UniProtKB-KW"/>
</dbReference>
<dbReference type="GO" id="GO:0004550">
    <property type="term" value="F:nucleoside diphosphate kinase activity"/>
    <property type="evidence" value="ECO:0007669"/>
    <property type="project" value="UniProtKB-UniRule"/>
</dbReference>
<dbReference type="GO" id="GO:0006241">
    <property type="term" value="P:CTP biosynthetic process"/>
    <property type="evidence" value="ECO:0007669"/>
    <property type="project" value="UniProtKB-UniRule"/>
</dbReference>
<dbReference type="GO" id="GO:0006183">
    <property type="term" value="P:GTP biosynthetic process"/>
    <property type="evidence" value="ECO:0007669"/>
    <property type="project" value="UniProtKB-UniRule"/>
</dbReference>
<dbReference type="GO" id="GO:0006228">
    <property type="term" value="P:UTP biosynthetic process"/>
    <property type="evidence" value="ECO:0007669"/>
    <property type="project" value="UniProtKB-UniRule"/>
</dbReference>
<dbReference type="CDD" id="cd04413">
    <property type="entry name" value="NDPk_I"/>
    <property type="match status" value="1"/>
</dbReference>
<dbReference type="FunFam" id="3.30.70.141:FF:000002">
    <property type="entry name" value="Nucleoside diphosphate kinase"/>
    <property type="match status" value="1"/>
</dbReference>
<dbReference type="Gene3D" id="3.30.70.141">
    <property type="entry name" value="Nucleoside diphosphate kinase-like domain"/>
    <property type="match status" value="1"/>
</dbReference>
<dbReference type="HAMAP" id="MF_00451">
    <property type="entry name" value="NDP_kinase"/>
    <property type="match status" value="1"/>
</dbReference>
<dbReference type="InterPro" id="IPR034907">
    <property type="entry name" value="NDK-like_dom"/>
</dbReference>
<dbReference type="InterPro" id="IPR036850">
    <property type="entry name" value="NDK-like_dom_sf"/>
</dbReference>
<dbReference type="InterPro" id="IPR001564">
    <property type="entry name" value="Nucleoside_diP_kinase"/>
</dbReference>
<dbReference type="InterPro" id="IPR023005">
    <property type="entry name" value="Nucleoside_diP_kinase_AS"/>
</dbReference>
<dbReference type="NCBIfam" id="NF001908">
    <property type="entry name" value="PRK00668.1"/>
    <property type="match status" value="1"/>
</dbReference>
<dbReference type="PANTHER" id="PTHR11349">
    <property type="entry name" value="NUCLEOSIDE DIPHOSPHATE KINASE"/>
    <property type="match status" value="1"/>
</dbReference>
<dbReference type="Pfam" id="PF00334">
    <property type="entry name" value="NDK"/>
    <property type="match status" value="1"/>
</dbReference>
<dbReference type="PRINTS" id="PR01243">
    <property type="entry name" value="NUCDPKINASE"/>
</dbReference>
<dbReference type="SMART" id="SM00562">
    <property type="entry name" value="NDK"/>
    <property type="match status" value="1"/>
</dbReference>
<dbReference type="SUPFAM" id="SSF54919">
    <property type="entry name" value="Nucleoside diphosphate kinase, NDK"/>
    <property type="match status" value="1"/>
</dbReference>
<dbReference type="PROSITE" id="PS00469">
    <property type="entry name" value="NDPK"/>
    <property type="match status" value="1"/>
</dbReference>
<dbReference type="PROSITE" id="PS51374">
    <property type="entry name" value="NDPK_LIKE"/>
    <property type="match status" value="1"/>
</dbReference>
<gene>
    <name evidence="1" type="primary">ndk</name>
    <name type="ordered locus">BH1654</name>
</gene>
<evidence type="ECO:0000255" key="1">
    <source>
        <dbReference type="HAMAP-Rule" id="MF_00451"/>
    </source>
</evidence>
<sequence length="147" mass="16532">MERTYLMIKPDGVQRNLIGEIVSRFEKKGFTLIGAKLMTVTKEQAETHYAEHKERPFFGELVDFITSGPVFAMVWEGENVIATARKMMGATNPADAEPGTIRGDFGVQVAMNVIHGSDSPESAKREIDIFFDSSELNEYDKVVNRWV</sequence>
<accession>Q9KCB9</accession>
<proteinExistence type="inferred from homology"/>
<protein>
    <recommendedName>
        <fullName evidence="1">Nucleoside diphosphate kinase</fullName>
        <shortName evidence="1">NDK</shortName>
        <shortName evidence="1">NDP kinase</shortName>
        <ecNumber evidence="1">2.7.4.6</ecNumber>
    </recommendedName>
    <alternativeName>
        <fullName evidence="1">Nucleoside-2-P kinase</fullName>
    </alternativeName>
</protein>
<reference key="1">
    <citation type="journal article" date="2000" name="Nucleic Acids Res.">
        <title>Complete genome sequence of the alkaliphilic bacterium Bacillus halodurans and genomic sequence comparison with Bacillus subtilis.</title>
        <authorList>
            <person name="Takami H."/>
            <person name="Nakasone K."/>
            <person name="Takaki Y."/>
            <person name="Maeno G."/>
            <person name="Sasaki R."/>
            <person name="Masui N."/>
            <person name="Fuji F."/>
            <person name="Hirama C."/>
            <person name="Nakamura Y."/>
            <person name="Ogasawara N."/>
            <person name="Kuhara S."/>
            <person name="Horikoshi K."/>
        </authorList>
    </citation>
    <scope>NUCLEOTIDE SEQUENCE [LARGE SCALE GENOMIC DNA]</scope>
    <source>
        <strain>ATCC BAA-125 / DSM 18197 / FERM 7344 / JCM 9153 / C-125</strain>
    </source>
</reference>